<organism>
    <name type="scientific">Staphylococcus epidermidis (strain ATCC 12228 / FDA PCI 1200)</name>
    <dbReference type="NCBI Taxonomy" id="176280"/>
    <lineage>
        <taxon>Bacteria</taxon>
        <taxon>Bacillati</taxon>
        <taxon>Bacillota</taxon>
        <taxon>Bacilli</taxon>
        <taxon>Bacillales</taxon>
        <taxon>Staphylococcaceae</taxon>
        <taxon>Staphylococcus</taxon>
    </lineage>
</organism>
<proteinExistence type="inferred from homology"/>
<evidence type="ECO:0000255" key="1">
    <source>
        <dbReference type="HAMAP-Rule" id="MF_00480"/>
    </source>
</evidence>
<evidence type="ECO:0000305" key="2"/>
<feature type="chain" id="PRO_0000124347" description="Small ribosomal subunit protein uS7">
    <location>
        <begin position="1"/>
        <end position="156"/>
    </location>
</feature>
<comment type="function">
    <text evidence="1">One of the primary rRNA binding proteins, it binds directly to 16S rRNA where it nucleates assembly of the head domain of the 30S subunit. Is located at the subunit interface close to the decoding center, probably blocks exit of the E-site tRNA.</text>
</comment>
<comment type="subunit">
    <text evidence="1">Part of the 30S ribosomal subunit. Contacts proteins S9 and S11.</text>
</comment>
<comment type="similarity">
    <text evidence="1">Belongs to the universal ribosomal protein uS7 family.</text>
</comment>
<name>RS7_STAES</name>
<reference key="1">
    <citation type="journal article" date="2003" name="Mol. Microbiol.">
        <title>Genome-based analysis of virulence genes in a non-biofilm-forming Staphylococcus epidermidis strain (ATCC 12228).</title>
        <authorList>
            <person name="Zhang Y.-Q."/>
            <person name="Ren S.-X."/>
            <person name="Li H.-L."/>
            <person name="Wang Y.-X."/>
            <person name="Fu G."/>
            <person name="Yang J."/>
            <person name="Qin Z.-Q."/>
            <person name="Miao Y.-G."/>
            <person name="Wang W.-Y."/>
            <person name="Chen R.-S."/>
            <person name="Shen Y."/>
            <person name="Chen Z."/>
            <person name="Yuan Z.-H."/>
            <person name="Zhao G.-P."/>
            <person name="Qu D."/>
            <person name="Danchin A."/>
            <person name="Wen Y.-M."/>
        </authorList>
    </citation>
    <scope>NUCLEOTIDE SEQUENCE [LARGE SCALE GENOMIC DNA]</scope>
    <source>
        <strain>ATCC 12228 / FDA PCI 1200</strain>
    </source>
</reference>
<keyword id="KW-0687">Ribonucleoprotein</keyword>
<keyword id="KW-0689">Ribosomal protein</keyword>
<keyword id="KW-0694">RNA-binding</keyword>
<keyword id="KW-0699">rRNA-binding</keyword>
<keyword id="KW-0820">tRNA-binding</keyword>
<gene>
    <name evidence="1" type="primary">rpsG</name>
    <name type="ordered locus">SE_0310</name>
</gene>
<dbReference type="EMBL" id="AE015929">
    <property type="protein sequence ID" value="AAO03907.1"/>
    <property type="molecule type" value="Genomic_DNA"/>
</dbReference>
<dbReference type="RefSeq" id="NP_763865.1">
    <property type="nucleotide sequence ID" value="NC_004461.1"/>
</dbReference>
<dbReference type="RefSeq" id="WP_001137495.1">
    <property type="nucleotide sequence ID" value="NZ_WBME01000014.1"/>
</dbReference>
<dbReference type="SMR" id="P66618"/>
<dbReference type="GeneID" id="98344880"/>
<dbReference type="KEGG" id="sep:SE_0310"/>
<dbReference type="PATRIC" id="fig|176280.10.peg.285"/>
<dbReference type="eggNOG" id="COG0049">
    <property type="taxonomic scope" value="Bacteria"/>
</dbReference>
<dbReference type="HOGENOM" id="CLU_072226_1_1_9"/>
<dbReference type="OrthoDB" id="9807653at2"/>
<dbReference type="PRO" id="PR:P66618"/>
<dbReference type="Proteomes" id="UP000001411">
    <property type="component" value="Chromosome"/>
</dbReference>
<dbReference type="GO" id="GO:0015935">
    <property type="term" value="C:small ribosomal subunit"/>
    <property type="evidence" value="ECO:0007669"/>
    <property type="project" value="InterPro"/>
</dbReference>
<dbReference type="GO" id="GO:0019843">
    <property type="term" value="F:rRNA binding"/>
    <property type="evidence" value="ECO:0007669"/>
    <property type="project" value="UniProtKB-UniRule"/>
</dbReference>
<dbReference type="GO" id="GO:0003735">
    <property type="term" value="F:structural constituent of ribosome"/>
    <property type="evidence" value="ECO:0007669"/>
    <property type="project" value="InterPro"/>
</dbReference>
<dbReference type="GO" id="GO:0000049">
    <property type="term" value="F:tRNA binding"/>
    <property type="evidence" value="ECO:0007669"/>
    <property type="project" value="UniProtKB-UniRule"/>
</dbReference>
<dbReference type="GO" id="GO:0006412">
    <property type="term" value="P:translation"/>
    <property type="evidence" value="ECO:0007669"/>
    <property type="project" value="UniProtKB-UniRule"/>
</dbReference>
<dbReference type="CDD" id="cd14869">
    <property type="entry name" value="uS7_Bacteria"/>
    <property type="match status" value="1"/>
</dbReference>
<dbReference type="FunFam" id="1.10.455.10:FF:000001">
    <property type="entry name" value="30S ribosomal protein S7"/>
    <property type="match status" value="1"/>
</dbReference>
<dbReference type="Gene3D" id="1.10.455.10">
    <property type="entry name" value="Ribosomal protein S7 domain"/>
    <property type="match status" value="1"/>
</dbReference>
<dbReference type="HAMAP" id="MF_00480_B">
    <property type="entry name" value="Ribosomal_uS7_B"/>
    <property type="match status" value="1"/>
</dbReference>
<dbReference type="InterPro" id="IPR000235">
    <property type="entry name" value="Ribosomal_uS7"/>
</dbReference>
<dbReference type="InterPro" id="IPR005717">
    <property type="entry name" value="Ribosomal_uS7_bac/org-type"/>
</dbReference>
<dbReference type="InterPro" id="IPR020606">
    <property type="entry name" value="Ribosomal_uS7_CS"/>
</dbReference>
<dbReference type="InterPro" id="IPR023798">
    <property type="entry name" value="Ribosomal_uS7_dom"/>
</dbReference>
<dbReference type="InterPro" id="IPR036823">
    <property type="entry name" value="Ribosomal_uS7_dom_sf"/>
</dbReference>
<dbReference type="NCBIfam" id="TIGR01029">
    <property type="entry name" value="rpsG_bact"/>
    <property type="match status" value="1"/>
</dbReference>
<dbReference type="PANTHER" id="PTHR11205">
    <property type="entry name" value="RIBOSOMAL PROTEIN S7"/>
    <property type="match status" value="1"/>
</dbReference>
<dbReference type="Pfam" id="PF00177">
    <property type="entry name" value="Ribosomal_S7"/>
    <property type="match status" value="1"/>
</dbReference>
<dbReference type="PIRSF" id="PIRSF002122">
    <property type="entry name" value="RPS7p_RPS7a_RPS5e_RPS7o"/>
    <property type="match status" value="1"/>
</dbReference>
<dbReference type="SUPFAM" id="SSF47973">
    <property type="entry name" value="Ribosomal protein S7"/>
    <property type="match status" value="1"/>
</dbReference>
<dbReference type="PROSITE" id="PS00052">
    <property type="entry name" value="RIBOSOMAL_S7"/>
    <property type="match status" value="1"/>
</dbReference>
<accession>P66618</accession>
<accession>Q99W62</accession>
<sequence length="156" mass="17795">MPRKGSVPKRDVLPDPIHNSKLVTKLINKIMLDGKRGTAQRILYSAFDLVEQRSGRDALEVFEEAINNIMPVLEVKARRVGGSNYQVPVEVRPERRTTLGLRWLVNYARLRGEKTMEDRLANEILDAANNTGGAVKKREDTHKMAEANKAFAHYRW</sequence>
<protein>
    <recommendedName>
        <fullName evidence="1">Small ribosomal subunit protein uS7</fullName>
    </recommendedName>
    <alternativeName>
        <fullName evidence="2">30S ribosomal protein S7</fullName>
    </alternativeName>
</protein>